<comment type="subunit">
    <text evidence="1">Part of the 50S ribosomal subunit. Contacts protein L32.</text>
</comment>
<comment type="similarity">
    <text evidence="1">Belongs to the bacterial ribosomal protein bL17 family.</text>
</comment>
<name>RL17_SYNS9</name>
<reference key="1">
    <citation type="submission" date="2005-08" db="EMBL/GenBank/DDBJ databases">
        <title>Complete sequence of Synechococcus sp. CC9902.</title>
        <authorList>
            <person name="Copeland A."/>
            <person name="Lucas S."/>
            <person name="Lapidus A."/>
            <person name="Barry K."/>
            <person name="Detter J.C."/>
            <person name="Glavina T."/>
            <person name="Hammon N."/>
            <person name="Israni S."/>
            <person name="Pitluck S."/>
            <person name="Martinez M."/>
            <person name="Schmutz J."/>
            <person name="Larimer F."/>
            <person name="Land M."/>
            <person name="Kyrpides N."/>
            <person name="Ivanova N."/>
            <person name="Richardson P."/>
        </authorList>
    </citation>
    <scope>NUCLEOTIDE SEQUENCE [LARGE SCALE GENOMIC DNA]</scope>
    <source>
        <strain>CC9902</strain>
    </source>
</reference>
<accession>Q3AW69</accession>
<evidence type="ECO:0000255" key="1">
    <source>
        <dbReference type="HAMAP-Rule" id="MF_01368"/>
    </source>
</evidence>
<evidence type="ECO:0000305" key="2"/>
<sequence>MRHQCRVPQLGRPADQRKAMLRALTTQLIREGRVTTTKARAKALRDEAERMITLAKDGSLASRRRAIGYIYDKQLVHALFDKAPTRYGERKGGYTRITRTVPRRGDNAEMAIIELV</sequence>
<proteinExistence type="inferred from homology"/>
<protein>
    <recommendedName>
        <fullName evidence="1">Large ribosomal subunit protein bL17</fullName>
    </recommendedName>
    <alternativeName>
        <fullName evidence="2">50S ribosomal protein L17</fullName>
    </alternativeName>
</protein>
<gene>
    <name evidence="1" type="primary">rplQ</name>
    <name evidence="1" type="synonym">rpl17</name>
    <name type="ordered locus">Syncc9902_1979</name>
</gene>
<keyword id="KW-1185">Reference proteome</keyword>
<keyword id="KW-0687">Ribonucleoprotein</keyword>
<keyword id="KW-0689">Ribosomal protein</keyword>
<dbReference type="EMBL" id="CP000097">
    <property type="protein sequence ID" value="ABB26937.1"/>
    <property type="molecule type" value="Genomic_DNA"/>
</dbReference>
<dbReference type="RefSeq" id="WP_009788913.1">
    <property type="nucleotide sequence ID" value="NC_007513.1"/>
</dbReference>
<dbReference type="SMR" id="Q3AW69"/>
<dbReference type="STRING" id="316279.Syncc9902_1979"/>
<dbReference type="KEGG" id="sye:Syncc9902_1979"/>
<dbReference type="eggNOG" id="COG0203">
    <property type="taxonomic scope" value="Bacteria"/>
</dbReference>
<dbReference type="HOGENOM" id="CLU_074407_2_2_3"/>
<dbReference type="OrthoDB" id="9809073at2"/>
<dbReference type="Proteomes" id="UP000002712">
    <property type="component" value="Chromosome"/>
</dbReference>
<dbReference type="GO" id="GO:0022625">
    <property type="term" value="C:cytosolic large ribosomal subunit"/>
    <property type="evidence" value="ECO:0007669"/>
    <property type="project" value="TreeGrafter"/>
</dbReference>
<dbReference type="GO" id="GO:0003735">
    <property type="term" value="F:structural constituent of ribosome"/>
    <property type="evidence" value="ECO:0007669"/>
    <property type="project" value="InterPro"/>
</dbReference>
<dbReference type="GO" id="GO:0006412">
    <property type="term" value="P:translation"/>
    <property type="evidence" value="ECO:0007669"/>
    <property type="project" value="UniProtKB-UniRule"/>
</dbReference>
<dbReference type="FunFam" id="3.90.1030.10:FF:000001">
    <property type="entry name" value="50S ribosomal protein L17"/>
    <property type="match status" value="1"/>
</dbReference>
<dbReference type="Gene3D" id="3.90.1030.10">
    <property type="entry name" value="Ribosomal protein L17"/>
    <property type="match status" value="1"/>
</dbReference>
<dbReference type="HAMAP" id="MF_01368">
    <property type="entry name" value="Ribosomal_bL17"/>
    <property type="match status" value="1"/>
</dbReference>
<dbReference type="InterPro" id="IPR000456">
    <property type="entry name" value="Ribosomal_bL17"/>
</dbReference>
<dbReference type="InterPro" id="IPR036373">
    <property type="entry name" value="Ribosomal_bL17_sf"/>
</dbReference>
<dbReference type="NCBIfam" id="TIGR00059">
    <property type="entry name" value="L17"/>
    <property type="match status" value="1"/>
</dbReference>
<dbReference type="PANTHER" id="PTHR14413:SF16">
    <property type="entry name" value="LARGE RIBOSOMAL SUBUNIT PROTEIN BL17M"/>
    <property type="match status" value="1"/>
</dbReference>
<dbReference type="PANTHER" id="PTHR14413">
    <property type="entry name" value="RIBOSOMAL PROTEIN L17"/>
    <property type="match status" value="1"/>
</dbReference>
<dbReference type="Pfam" id="PF01196">
    <property type="entry name" value="Ribosomal_L17"/>
    <property type="match status" value="1"/>
</dbReference>
<dbReference type="SUPFAM" id="SSF64263">
    <property type="entry name" value="Prokaryotic ribosomal protein L17"/>
    <property type="match status" value="1"/>
</dbReference>
<organism>
    <name type="scientific">Synechococcus sp. (strain CC9902)</name>
    <dbReference type="NCBI Taxonomy" id="316279"/>
    <lineage>
        <taxon>Bacteria</taxon>
        <taxon>Bacillati</taxon>
        <taxon>Cyanobacteriota</taxon>
        <taxon>Cyanophyceae</taxon>
        <taxon>Synechococcales</taxon>
        <taxon>Synechococcaceae</taxon>
        <taxon>Synechococcus</taxon>
    </lineage>
</organism>
<feature type="chain" id="PRO_1000055979" description="Large ribosomal subunit protein bL17">
    <location>
        <begin position="1"/>
        <end position="116"/>
    </location>
</feature>